<dbReference type="EMBL" id="AY519649">
    <property type="protein sequence ID" value="AAS10119.1"/>
    <property type="molecule type" value="mRNA"/>
</dbReference>
<dbReference type="EMBL" id="AF371976">
    <property type="protein sequence ID" value="AAK54740.2"/>
    <property type="molecule type" value="mRNA"/>
</dbReference>
<dbReference type="EMBL" id="AL162874">
    <property type="protein sequence ID" value="CAB85537.1"/>
    <property type="status" value="ALT_SEQ"/>
    <property type="molecule type" value="Genomic_DNA"/>
</dbReference>
<dbReference type="EMBL" id="CP002688">
    <property type="protein sequence ID" value="AED90458.1"/>
    <property type="molecule type" value="Genomic_DNA"/>
</dbReference>
<dbReference type="EMBL" id="CP002688">
    <property type="protein sequence ID" value="AED90459.1"/>
    <property type="molecule type" value="Genomic_DNA"/>
</dbReference>
<dbReference type="PIR" id="T48253">
    <property type="entry name" value="T48253"/>
</dbReference>
<dbReference type="SMR" id="Q6R032"/>
<dbReference type="FunCoup" id="Q6R032">
    <property type="interactions" value="57"/>
</dbReference>
<dbReference type="IntAct" id="Q6R032">
    <property type="interactions" value="6"/>
</dbReference>
<dbReference type="STRING" id="3702.Q6R032"/>
<dbReference type="PaxDb" id="3702-AT5G02320.1"/>
<dbReference type="EnsemblPlants" id="AT5G02320.1">
    <property type="protein sequence ID" value="AT5G02320.1"/>
    <property type="gene ID" value="AT5G02320"/>
</dbReference>
<dbReference type="EnsemblPlants" id="AT5G02320.2">
    <property type="protein sequence ID" value="AT5G02320.2"/>
    <property type="gene ID" value="AT5G02320"/>
</dbReference>
<dbReference type="GeneID" id="831802"/>
<dbReference type="Gramene" id="AT5G02320.1">
    <property type="protein sequence ID" value="AT5G02320.1"/>
    <property type="gene ID" value="AT5G02320"/>
</dbReference>
<dbReference type="Gramene" id="AT5G02320.2">
    <property type="protein sequence ID" value="AT5G02320.2"/>
    <property type="gene ID" value="AT5G02320"/>
</dbReference>
<dbReference type="KEGG" id="ath:AT5G02320"/>
<dbReference type="Araport" id="AT5G02320"/>
<dbReference type="TAIR" id="AT5G02320">
    <property type="gene designation" value="MYB3R-5"/>
</dbReference>
<dbReference type="eggNOG" id="KOG0048">
    <property type="taxonomic scope" value="Eukaryota"/>
</dbReference>
<dbReference type="HOGENOM" id="CLU_016150_3_1_1"/>
<dbReference type="InParanoid" id="Q6R032"/>
<dbReference type="OMA" id="STHSPEY"/>
<dbReference type="PhylomeDB" id="Q6R032"/>
<dbReference type="PRO" id="PR:Q6R032"/>
<dbReference type="Proteomes" id="UP000006548">
    <property type="component" value="Chromosome 5"/>
</dbReference>
<dbReference type="ExpressionAtlas" id="Q6R032">
    <property type="expression patterns" value="baseline and differential"/>
</dbReference>
<dbReference type="GO" id="GO:0005634">
    <property type="term" value="C:nucleus"/>
    <property type="evidence" value="ECO:0007669"/>
    <property type="project" value="UniProtKB-SubCell"/>
</dbReference>
<dbReference type="GO" id="GO:0003700">
    <property type="term" value="F:DNA-binding transcription factor activity"/>
    <property type="evidence" value="ECO:0000250"/>
    <property type="project" value="TAIR"/>
</dbReference>
<dbReference type="GO" id="GO:0043565">
    <property type="term" value="F:sequence-specific DNA binding"/>
    <property type="evidence" value="ECO:0000250"/>
    <property type="project" value="UniProtKB"/>
</dbReference>
<dbReference type="GO" id="GO:0008285">
    <property type="term" value="P:negative regulation of cell population proliferation"/>
    <property type="evidence" value="ECO:0000315"/>
    <property type="project" value="UniProtKB"/>
</dbReference>
<dbReference type="GO" id="GO:0045892">
    <property type="term" value="P:negative regulation of DNA-templated transcription"/>
    <property type="evidence" value="ECO:0000315"/>
    <property type="project" value="UniProtKB"/>
</dbReference>
<dbReference type="GO" id="GO:0009723">
    <property type="term" value="P:response to ethylene"/>
    <property type="evidence" value="ECO:0000270"/>
    <property type="project" value="UniProtKB"/>
</dbReference>
<dbReference type="GO" id="GO:0009751">
    <property type="term" value="P:response to salicylic acid"/>
    <property type="evidence" value="ECO:0000270"/>
    <property type="project" value="UniProtKB"/>
</dbReference>
<dbReference type="CDD" id="cd00167">
    <property type="entry name" value="SANT"/>
    <property type="match status" value="3"/>
</dbReference>
<dbReference type="FunFam" id="1.10.10.60:FF:000324">
    <property type="entry name" value="Transcription factor MYB3R-2"/>
    <property type="match status" value="1"/>
</dbReference>
<dbReference type="FunFam" id="1.10.10.60:FF:000010">
    <property type="entry name" value="Transcriptional activator Myb isoform A"/>
    <property type="match status" value="1"/>
</dbReference>
<dbReference type="FunFam" id="1.10.10.60:FF:000016">
    <property type="entry name" value="Transcriptional activator Myb isoform A"/>
    <property type="match status" value="1"/>
</dbReference>
<dbReference type="Gene3D" id="1.10.10.60">
    <property type="entry name" value="Homeodomain-like"/>
    <property type="match status" value="3"/>
</dbReference>
<dbReference type="InterPro" id="IPR009057">
    <property type="entry name" value="Homeodomain-like_sf"/>
</dbReference>
<dbReference type="InterPro" id="IPR017930">
    <property type="entry name" value="Myb_dom"/>
</dbReference>
<dbReference type="InterPro" id="IPR050560">
    <property type="entry name" value="MYB_TF"/>
</dbReference>
<dbReference type="InterPro" id="IPR001005">
    <property type="entry name" value="SANT/Myb"/>
</dbReference>
<dbReference type="PANTHER" id="PTHR45614">
    <property type="entry name" value="MYB PROTEIN-RELATED"/>
    <property type="match status" value="1"/>
</dbReference>
<dbReference type="Pfam" id="PF00249">
    <property type="entry name" value="Myb_DNA-binding"/>
    <property type="match status" value="3"/>
</dbReference>
<dbReference type="SMART" id="SM00717">
    <property type="entry name" value="SANT"/>
    <property type="match status" value="3"/>
</dbReference>
<dbReference type="SUPFAM" id="SSF46689">
    <property type="entry name" value="Homeodomain-like"/>
    <property type="match status" value="2"/>
</dbReference>
<dbReference type="PROSITE" id="PS51294">
    <property type="entry name" value="HTH_MYB"/>
    <property type="match status" value="3"/>
</dbReference>
<accession>Q6R032</accession>
<accession>Q94FL8</accession>
<accession>Q9LZ93</accession>
<proteinExistence type="evidence at transcript level"/>
<protein>
    <recommendedName>
        <fullName evidence="8">Transcription factor MYB3R-5</fullName>
    </recommendedName>
    <alternativeName>
        <fullName evidence="8">Myb-related protein 3R-5</fullName>
    </alternativeName>
</protein>
<sequence length="548" mass="61732">MSSSSNPPVCSPEKEERSEMKIEIQCMENKQPLAASCSSASEGSGCFFLKSPEIATPATVSSFPRRTSGPMRRAKGGWTPEEDETLRRAVEKYKGKRWKKIAEFFPERTEVQCLHRWQKVLNPELVKGPWTQEEDDKIVELVKKYGPAKWSVIAKSLPGRIGKQCRERWHNHLNPGIRKDAWTVEEESALMNSHRMYGNKWAEIAKVLPGRTDNAIKNHWNSSLKKKLEFYLATGNLPPPASKFIVLKDIADGDRDSKQSSATKPFKDSDSLTQTSSGNTDSNEVGRDHFDSSSALLEEVAASRRIGVNEYACSPVEYKPQLPNLEPISEEVRINSKAYFERSIQRKVENGFGTPKHGNLYYKSPLDYYFPSEADLQHMYGYECGCSPGAASPVSLMTTPCNKDSGLTATRSPESFLREAARTFPNTPSIFRKRRKVVLAAKTDAVVVVNGVVKEVDRKEESKDMRKSLLLETTDNCSDDEELGLNGNAFNLSPPYRLRAKRTAVIKSRQLEFTSEKEKQPDNEIEFTSAKEKQPDNEIKTSEEDKPV</sequence>
<evidence type="ECO:0000250" key="1">
    <source>
        <dbReference type="UniProtKB" id="Q8H1P9"/>
    </source>
</evidence>
<evidence type="ECO:0000250" key="2">
    <source>
        <dbReference type="UniProtKB" id="Q94FL9"/>
    </source>
</evidence>
<evidence type="ECO:0000255" key="3">
    <source>
        <dbReference type="PROSITE-ProRule" id="PRU00625"/>
    </source>
</evidence>
<evidence type="ECO:0000255" key="4">
    <source>
        <dbReference type="PROSITE-ProRule" id="PRU00768"/>
    </source>
</evidence>
<evidence type="ECO:0000256" key="5">
    <source>
        <dbReference type="SAM" id="MobiDB-lite"/>
    </source>
</evidence>
<evidence type="ECO:0000269" key="6">
    <source>
    </source>
</evidence>
<evidence type="ECO:0000269" key="7">
    <source>
    </source>
</evidence>
<evidence type="ECO:0000303" key="8">
    <source>
    </source>
</evidence>
<evidence type="ECO:0000305" key="9"/>
<evidence type="ECO:0000312" key="10">
    <source>
        <dbReference type="Araport" id="AT5G02320"/>
    </source>
</evidence>
<evidence type="ECO:0000312" key="11">
    <source>
        <dbReference type="EMBL" id="CAB85537.1"/>
    </source>
</evidence>
<reference key="1">
    <citation type="submission" date="2004-01" db="EMBL/GenBank/DDBJ databases">
        <title>The MYB transcription factor family in Arabidopsis: A genome-wide cloning and expression pattern analysis.</title>
        <authorList>
            <person name="Qu L."/>
            <person name="Gu H."/>
        </authorList>
    </citation>
    <scope>NUCLEOTIDE SEQUENCE [MRNA]</scope>
</reference>
<reference key="2">
    <citation type="journal article" date="2001" name="Curr. Opin. Plant Biol.">
        <title>The R2R3-MYB gene family in Arabidopsis thaliana.</title>
        <authorList>
            <person name="Stracke R."/>
            <person name="Werber M."/>
            <person name="Weisshaar B."/>
        </authorList>
    </citation>
    <scope>NUCLEOTIDE SEQUENCE [MRNA]</scope>
    <scope>GENE FAMILY</scope>
    <scope>NOMENCLATURE</scope>
    <source>
        <strain>cv. Columbia</strain>
    </source>
</reference>
<reference key="3">
    <citation type="journal article" date="2000" name="Nature">
        <title>Sequence and analysis of chromosome 5 of the plant Arabidopsis thaliana.</title>
        <authorList>
            <person name="Tabata S."/>
            <person name="Kaneko T."/>
            <person name="Nakamura Y."/>
            <person name="Kotani H."/>
            <person name="Kato T."/>
            <person name="Asamizu E."/>
            <person name="Miyajima N."/>
            <person name="Sasamoto S."/>
            <person name="Kimura T."/>
            <person name="Hosouchi T."/>
            <person name="Kawashima K."/>
            <person name="Kohara M."/>
            <person name="Matsumoto M."/>
            <person name="Matsuno A."/>
            <person name="Muraki A."/>
            <person name="Nakayama S."/>
            <person name="Nakazaki N."/>
            <person name="Naruo K."/>
            <person name="Okumura S."/>
            <person name="Shinpo S."/>
            <person name="Takeuchi C."/>
            <person name="Wada T."/>
            <person name="Watanabe A."/>
            <person name="Yamada M."/>
            <person name="Yasuda M."/>
            <person name="Sato S."/>
            <person name="de la Bastide M."/>
            <person name="Huang E."/>
            <person name="Spiegel L."/>
            <person name="Gnoj L."/>
            <person name="O'Shaughnessy A."/>
            <person name="Preston R."/>
            <person name="Habermann K."/>
            <person name="Murray J."/>
            <person name="Johnson D."/>
            <person name="Rohlfing T."/>
            <person name="Nelson J."/>
            <person name="Stoneking T."/>
            <person name="Pepin K."/>
            <person name="Spieth J."/>
            <person name="Sekhon M."/>
            <person name="Armstrong J."/>
            <person name="Becker M."/>
            <person name="Belter E."/>
            <person name="Cordum H."/>
            <person name="Cordes M."/>
            <person name="Courtney L."/>
            <person name="Courtney W."/>
            <person name="Dante M."/>
            <person name="Du H."/>
            <person name="Edwards J."/>
            <person name="Fryman J."/>
            <person name="Haakensen B."/>
            <person name="Lamar E."/>
            <person name="Latreille P."/>
            <person name="Leonard S."/>
            <person name="Meyer R."/>
            <person name="Mulvaney E."/>
            <person name="Ozersky P."/>
            <person name="Riley A."/>
            <person name="Strowmatt C."/>
            <person name="Wagner-McPherson C."/>
            <person name="Wollam A."/>
            <person name="Yoakum M."/>
            <person name="Bell M."/>
            <person name="Dedhia N."/>
            <person name="Parnell L."/>
            <person name="Shah R."/>
            <person name="Rodriguez M."/>
            <person name="Hoon See L."/>
            <person name="Vil D."/>
            <person name="Baker J."/>
            <person name="Kirchoff K."/>
            <person name="Toth K."/>
            <person name="King L."/>
            <person name="Bahret A."/>
            <person name="Miller B."/>
            <person name="Marra M.A."/>
            <person name="Martienssen R."/>
            <person name="McCombie W.R."/>
            <person name="Wilson R.K."/>
            <person name="Murphy G."/>
            <person name="Bancroft I."/>
            <person name="Volckaert G."/>
            <person name="Wambutt R."/>
            <person name="Duesterhoeft A."/>
            <person name="Stiekema W."/>
            <person name="Pohl T."/>
            <person name="Entian K.-D."/>
            <person name="Terryn N."/>
            <person name="Hartley N."/>
            <person name="Bent E."/>
            <person name="Johnson S."/>
            <person name="Langham S.-A."/>
            <person name="McCullagh B."/>
            <person name="Robben J."/>
            <person name="Grymonprez B."/>
            <person name="Zimmermann W."/>
            <person name="Ramsperger U."/>
            <person name="Wedler H."/>
            <person name="Balke K."/>
            <person name="Wedler E."/>
            <person name="Peters S."/>
            <person name="van Staveren M."/>
            <person name="Dirkse W."/>
            <person name="Mooijman P."/>
            <person name="Klein Lankhorst R."/>
            <person name="Weitzenegger T."/>
            <person name="Bothe G."/>
            <person name="Rose M."/>
            <person name="Hauf J."/>
            <person name="Berneiser S."/>
            <person name="Hempel S."/>
            <person name="Feldpausch M."/>
            <person name="Lamberth S."/>
            <person name="Villarroel R."/>
            <person name="Gielen J."/>
            <person name="Ardiles W."/>
            <person name="Bents O."/>
            <person name="Lemcke K."/>
            <person name="Kolesov G."/>
            <person name="Mayer K.F.X."/>
            <person name="Rudd S."/>
            <person name="Schoof H."/>
            <person name="Schueller C."/>
            <person name="Zaccaria P."/>
            <person name="Mewes H.-W."/>
            <person name="Bevan M."/>
            <person name="Fransz P.F."/>
        </authorList>
    </citation>
    <scope>NUCLEOTIDE SEQUENCE [LARGE SCALE GENOMIC DNA]</scope>
    <source>
        <strain>cv. Columbia</strain>
    </source>
</reference>
<reference key="4">
    <citation type="journal article" date="2017" name="Plant J.">
        <title>Araport11: a complete reannotation of the Arabidopsis thaliana reference genome.</title>
        <authorList>
            <person name="Cheng C.Y."/>
            <person name="Krishnakumar V."/>
            <person name="Chan A.P."/>
            <person name="Thibaud-Nissen F."/>
            <person name="Schobel S."/>
            <person name="Town C.D."/>
        </authorList>
    </citation>
    <scope>GENOME REANNOTATION</scope>
    <source>
        <strain>cv. Columbia</strain>
    </source>
</reference>
<reference key="5">
    <citation type="journal article" date="2006" name="Plant Mol. Biol.">
        <title>The MYB transcription factor superfamily of Arabidopsis: expression analysis and phylogenetic comparison with the rice MYB family.</title>
        <authorList>
            <person name="Chen Y."/>
            <person name="Yang X."/>
            <person name="He K."/>
            <person name="Liu M."/>
            <person name="Li J."/>
            <person name="Gao Z."/>
            <person name="Lin Z."/>
            <person name="Zhang Y."/>
            <person name="Wang X."/>
            <person name="Qiu X."/>
            <person name="Shen Y."/>
            <person name="Zhang L."/>
            <person name="Deng X."/>
            <person name="Luo J."/>
            <person name="Deng X.-W."/>
            <person name="Chen Z."/>
            <person name="Gu H."/>
            <person name="Qu L.-J."/>
        </authorList>
    </citation>
    <scope>INDUCTION BY ETHYLENE AND SALICYLIC ACID</scope>
    <scope>GENE FAMILY</scope>
</reference>
<reference key="6">
    <citation type="journal article" date="2007" name="Development">
        <title>R1R2R3-Myb proteins positively regulate cytokinesis through activation of KNOLLE transcription in Arabidopsis thaliana.</title>
        <authorList>
            <person name="Haga N."/>
            <person name="Kato K."/>
            <person name="Murase M."/>
            <person name="Araki S."/>
            <person name="Kubo M."/>
            <person name="Demura T."/>
            <person name="Suzuki K."/>
            <person name="Mueller I."/>
            <person name="Voss U."/>
            <person name="Juergens G."/>
            <person name="Ito M."/>
        </authorList>
    </citation>
    <scope>GENE FAMILY</scope>
    <source>
        <strain>cv. Columbia</strain>
    </source>
</reference>
<reference key="7">
    <citation type="journal article" date="2015" name="EMBO J.">
        <title>Transcriptional repression by MYB3R proteins regulates plant organ growth.</title>
        <authorList>
            <person name="Kobayashi K."/>
            <person name="Suzuki T."/>
            <person name="Iwata E."/>
            <person name="Nakamichi N."/>
            <person name="Suzuki T."/>
            <person name="Chen P."/>
            <person name="Ohtani M."/>
            <person name="Ishida T."/>
            <person name="Hosoya H."/>
            <person name="Mueller S."/>
            <person name="Leviczky T."/>
            <person name="Pettko-Szandtner A."/>
            <person name="Darula Z."/>
            <person name="Iwamoto A."/>
            <person name="Nomoto M."/>
            <person name="Tada Y."/>
            <person name="Higashiyama T."/>
            <person name="Demura T."/>
            <person name="Doonan J.H."/>
            <person name="Hauser M.T."/>
            <person name="Sugimoto K."/>
            <person name="Umeda M."/>
            <person name="Magyar Z."/>
            <person name="Boegre L."/>
            <person name="Ito M."/>
        </authorList>
    </citation>
    <scope>FUNCTION</scope>
    <scope>DISRUPTION PHENOTYPE</scope>
    <scope>DEVELOPMENTAL STAGE</scope>
    <source>
        <strain>cv. Columbia</strain>
    </source>
</reference>
<gene>
    <name evidence="8" type="primary">MYB3R5</name>
    <name evidence="10" type="ordered locus">At5g02320</name>
    <name evidence="11" type="ORF">T1E22.80</name>
</gene>
<name>MB3R5_ARATH</name>
<keyword id="KW-0238">DNA-binding</keyword>
<keyword id="KW-0539">Nucleus</keyword>
<keyword id="KW-1185">Reference proteome</keyword>
<keyword id="KW-0677">Repeat</keyword>
<keyword id="KW-0678">Repressor</keyword>
<keyword id="KW-0804">Transcription</keyword>
<keyword id="KW-0805">Transcription regulation</keyword>
<comment type="function">
    <text evidence="2 7">Transcription factor that binds 5'-AACGG-3' motifs in gene promoters (By similarity). Transcription repressor that regulates organ growth. Binds to the promoters of G2/M-specific genes and to E2F target genes to prevent their expression in post-mitotic cells and to restrict the time window of their expression in proliferating cells (PubMed:26069325).</text>
</comment>
<comment type="subunit">
    <text evidence="1">Component of a DREAM-like complex which modulates a variety of developmentally regulated genes and of the mitotic genes in proliferating and differentiated cells.</text>
</comment>
<comment type="subcellular location">
    <subcellularLocation>
        <location evidence="3 4">Nucleus</location>
    </subcellularLocation>
</comment>
<comment type="developmental stage">
    <text evidence="7">Expressed both in proliferating and maturing stages of leaves.</text>
</comment>
<comment type="induction">
    <text evidence="6">Slightly induced by ethylene and salicylic acid (SA).</text>
</comment>
<comment type="disruption phenotype">
    <text evidence="7">In double mutant myb3r3 myb3r5 and triple mutant myb3r1 myb3r3 myb3r5, up-regulation of many G2/M-specific genes leading to larger seeds, organs and embryos due to overproliferation and ectopic cell divisions.</text>
</comment>
<comment type="sequence caution" evidence="9">
    <conflict type="erroneous gene model prediction">
        <sequence resource="EMBL-CDS" id="CAB85537"/>
    </conflict>
</comment>
<organism>
    <name type="scientific">Arabidopsis thaliana</name>
    <name type="common">Mouse-ear cress</name>
    <dbReference type="NCBI Taxonomy" id="3702"/>
    <lineage>
        <taxon>Eukaryota</taxon>
        <taxon>Viridiplantae</taxon>
        <taxon>Streptophyta</taxon>
        <taxon>Embryophyta</taxon>
        <taxon>Tracheophyta</taxon>
        <taxon>Spermatophyta</taxon>
        <taxon>Magnoliopsida</taxon>
        <taxon>eudicotyledons</taxon>
        <taxon>Gunneridae</taxon>
        <taxon>Pentapetalae</taxon>
        <taxon>rosids</taxon>
        <taxon>malvids</taxon>
        <taxon>Brassicales</taxon>
        <taxon>Brassicaceae</taxon>
        <taxon>Camelineae</taxon>
        <taxon>Arabidopsis</taxon>
    </lineage>
</organism>
<feature type="chain" id="PRO_0000438895" description="Transcription factor MYB3R-5">
    <location>
        <begin position="1"/>
        <end position="548"/>
    </location>
</feature>
<feature type="domain" description="HTH myb-type 1" evidence="3">
    <location>
        <begin position="70"/>
        <end position="121"/>
    </location>
</feature>
<feature type="domain" description="HTH myb-type 2" evidence="3">
    <location>
        <begin position="122"/>
        <end position="177"/>
    </location>
</feature>
<feature type="domain" description="HTH myb-type 3" evidence="3">
    <location>
        <begin position="178"/>
        <end position="228"/>
    </location>
</feature>
<feature type="DNA-binding region" description="H-T-H motif" evidence="3">
    <location>
        <begin position="98"/>
        <end position="121"/>
    </location>
</feature>
<feature type="DNA-binding region" description="H-T-H motif" evidence="3">
    <location>
        <begin position="150"/>
        <end position="173"/>
    </location>
</feature>
<feature type="DNA-binding region" description="H-T-H motif" evidence="3">
    <location>
        <begin position="201"/>
        <end position="224"/>
    </location>
</feature>
<feature type="region of interest" description="Disordered" evidence="5">
    <location>
        <begin position="60"/>
        <end position="80"/>
    </location>
</feature>
<feature type="region of interest" description="Disordered" evidence="5">
    <location>
        <begin position="256"/>
        <end position="288"/>
    </location>
</feature>
<feature type="region of interest" description="Disordered" evidence="5">
    <location>
        <begin position="512"/>
        <end position="548"/>
    </location>
</feature>
<feature type="short sequence motif" description="Nuclear localization signal" evidence="4">
    <location>
        <begin position="86"/>
        <end position="93"/>
    </location>
</feature>
<feature type="compositionally biased region" description="Polar residues" evidence="5">
    <location>
        <begin position="271"/>
        <end position="283"/>
    </location>
</feature>
<feature type="compositionally biased region" description="Basic and acidic residues" evidence="5">
    <location>
        <begin position="529"/>
        <end position="548"/>
    </location>
</feature>
<feature type="sequence conflict" description="In Ref. 2; AAK54740." evidence="9" ref="2">
    <original>S</original>
    <variation>L</variation>
    <location>
        <position position="3"/>
    </location>
</feature>